<sequence>MLLQRCPVLIRSPTAILGKMIKTHQFLIGIGRCPILATQGTTCSQIHLKATKAGGDSPSWAKSHCPFMLLELQDGKSKIVQKAAPEVQEDVKTFKTDLPISLASTSLRKPFFSPQEPEKNSEKVTHLIQNNMAGNHVFGYDQFFRNKIMEKKQDHTYRVFKTVNRWADAYPFAEHFFEASVASKDVSVWCSNDYLGMSRHPRVLQATQETLQRHGAGAGGTRNISGTSRFHVELEQELAELHQKDSALLFSSCFVANDSTLFTLAKILPGCEIYSDAGNHASMIQGIRNSGAAKFVFRHNDPDHLKKLLKKSNPETPKIVAFETVHSMDGAICPLEELCDVAHQYGALTFVDEVHAVGLYGSRGAGIGERDGIMHKIDIISGTLGKAFGCVGGYIASTRDLVDMVRSYAAGFIFTTSLPPMVLSGALESVRLLKGEEGQALRRAHQRNVKHMRQLLMDRGLPVIPCPSHIIPIRVGDAALNSRICDLLLSKHGIYVQAINYPTVPRGEELLRLAPSPHHSPQMMEDFVEKLLAAWTEVGLPLQDVSIAACNFCRRPVHFELMSEWERSYFGNMGPQYVTTYA</sequence>
<proteinExistence type="evidence at transcript level"/>
<reference key="1">
    <citation type="journal article" date="1999" name="Comp. Biochem. Physiol.">
        <title>Comparison of the beluga whale (Delphinapterus leucas) expressed genes for 5-aminolevulinate synthase with those in other vertebrates.</title>
        <authorList>
            <person name="Kreiling J.A."/>
            <person name="Duncan R."/>
            <person name="Faggart M.A."/>
            <person name="Cornell N.W."/>
        </authorList>
    </citation>
    <scope>NUCLEOTIDE SEQUENCE [MRNA]</scope>
</reference>
<comment type="function">
    <text evidence="2">Catalyzes the pyridoxal 5'-phosphate (PLP)-dependent condensation of succinyl-CoA and glycine to form aminolevulinic acid (ALA), with CoA and CO2 as by-products (By similarity). Contributes significantly to heme formation during erythropoiesis (By similarity).</text>
</comment>
<comment type="catalytic activity">
    <reaction evidence="2">
        <text>succinyl-CoA + glycine + H(+) = 5-aminolevulinate + CO2 + CoA</text>
        <dbReference type="Rhea" id="RHEA:12921"/>
        <dbReference type="ChEBI" id="CHEBI:15378"/>
        <dbReference type="ChEBI" id="CHEBI:16526"/>
        <dbReference type="ChEBI" id="CHEBI:57287"/>
        <dbReference type="ChEBI" id="CHEBI:57292"/>
        <dbReference type="ChEBI" id="CHEBI:57305"/>
        <dbReference type="ChEBI" id="CHEBI:356416"/>
        <dbReference type="EC" id="2.3.1.37"/>
    </reaction>
    <physiologicalReaction direction="left-to-right" evidence="2">
        <dbReference type="Rhea" id="RHEA:12922"/>
    </physiologicalReaction>
</comment>
<comment type="cofactor">
    <cofactor evidence="2">
        <name>pyridoxal 5'-phosphate</name>
        <dbReference type="ChEBI" id="CHEBI:597326"/>
    </cofactor>
</comment>
<comment type="pathway">
    <text evidence="2">Porphyrin-containing compound metabolism; protoporphyrin-IX biosynthesis; 5-aminolevulinate from glycine: step 1/1.</text>
</comment>
<comment type="subunit">
    <text evidence="2">Homodimer.</text>
</comment>
<comment type="subcellular location">
    <subcellularLocation>
        <location evidence="2">Mitochondrion inner membrane</location>
        <topology evidence="2">Peripheral membrane protein</topology>
    </subcellularLocation>
    <text evidence="2">Localizes to the matrix side of the mitochondrion inner membrane.</text>
</comment>
<comment type="domain">
    <text evidence="2">C-terminus is a mobile self-inhibitory loop which interferes directly with active site.</text>
</comment>
<comment type="similarity">
    <text evidence="4">Belongs to the class-II pyridoxal-phosphate-dependent aminotransferase family.</text>
</comment>
<evidence type="ECO:0000250" key="1">
    <source>
        <dbReference type="UniProtKB" id="P18079"/>
    </source>
</evidence>
<evidence type="ECO:0000250" key="2">
    <source>
        <dbReference type="UniProtKB" id="P22557"/>
    </source>
</evidence>
<evidence type="ECO:0000255" key="3"/>
<evidence type="ECO:0000305" key="4"/>
<protein>
    <recommendedName>
        <fullName>5-aminolevulinate synthase, erythroid-specific, mitochondrial</fullName>
        <shortName>ALAS-E</shortName>
        <ecNumber evidence="2">2.3.1.37</ecNumber>
    </recommendedName>
    <alternativeName>
        <fullName>5-aminolevulinic acid synthase 2</fullName>
    </alternativeName>
    <alternativeName>
        <fullName>Delta-ALA synthase 2</fullName>
    </alternativeName>
    <alternativeName>
        <fullName>Delta-aminolevulinate synthase 2</fullName>
    </alternativeName>
</protein>
<dbReference type="EC" id="2.3.1.37" evidence="2"/>
<dbReference type="EMBL" id="AF086786">
    <property type="protein sequence ID" value="AAD41464.1"/>
    <property type="molecule type" value="mRNA"/>
</dbReference>
<dbReference type="RefSeq" id="XP_022419305.1">
    <property type="nucleotide sequence ID" value="XM_022563597.1"/>
</dbReference>
<dbReference type="SMR" id="Q9XT75"/>
<dbReference type="FunCoup" id="Q9XT75">
    <property type="interactions" value="674"/>
</dbReference>
<dbReference type="STRING" id="9749.Q9XT75"/>
<dbReference type="GeneID" id="111169408"/>
<dbReference type="InParanoid" id="Q9XT75"/>
<dbReference type="UniPathway" id="UPA00251">
    <property type="reaction ID" value="UER00375"/>
</dbReference>
<dbReference type="Proteomes" id="UP000248483">
    <property type="component" value="Unplaced"/>
</dbReference>
<dbReference type="GO" id="GO:0005743">
    <property type="term" value="C:mitochondrial inner membrane"/>
    <property type="evidence" value="ECO:0000250"/>
    <property type="project" value="UniProtKB"/>
</dbReference>
<dbReference type="GO" id="GO:0005759">
    <property type="term" value="C:mitochondrial matrix"/>
    <property type="evidence" value="ECO:0007669"/>
    <property type="project" value="InterPro"/>
</dbReference>
<dbReference type="GO" id="GO:0005739">
    <property type="term" value="C:mitochondrion"/>
    <property type="evidence" value="ECO:0000250"/>
    <property type="project" value="UniProtKB"/>
</dbReference>
<dbReference type="GO" id="GO:0003870">
    <property type="term" value="F:5-aminolevulinate synthase activity"/>
    <property type="evidence" value="ECO:0000250"/>
    <property type="project" value="UniProtKB"/>
</dbReference>
<dbReference type="GO" id="GO:0030170">
    <property type="term" value="F:pyridoxal phosphate binding"/>
    <property type="evidence" value="ECO:0007669"/>
    <property type="project" value="InterPro"/>
</dbReference>
<dbReference type="GO" id="GO:0048821">
    <property type="term" value="P:erythrocyte development"/>
    <property type="evidence" value="ECO:0007669"/>
    <property type="project" value="TreeGrafter"/>
</dbReference>
<dbReference type="GO" id="GO:0030218">
    <property type="term" value="P:erythrocyte differentiation"/>
    <property type="evidence" value="ECO:0000250"/>
    <property type="project" value="UniProtKB"/>
</dbReference>
<dbReference type="GO" id="GO:0006783">
    <property type="term" value="P:heme biosynthetic process"/>
    <property type="evidence" value="ECO:0000250"/>
    <property type="project" value="UniProtKB"/>
</dbReference>
<dbReference type="GO" id="GO:0042541">
    <property type="term" value="P:hemoglobin biosynthetic process"/>
    <property type="evidence" value="ECO:0000250"/>
    <property type="project" value="UniProtKB"/>
</dbReference>
<dbReference type="GO" id="GO:0006782">
    <property type="term" value="P:protoporphyrinogen IX biosynthetic process"/>
    <property type="evidence" value="ECO:0007669"/>
    <property type="project" value="UniProtKB-UniPathway"/>
</dbReference>
<dbReference type="GO" id="GO:0001666">
    <property type="term" value="P:response to hypoxia"/>
    <property type="evidence" value="ECO:0000250"/>
    <property type="project" value="UniProtKB"/>
</dbReference>
<dbReference type="CDD" id="cd06454">
    <property type="entry name" value="KBL_like"/>
    <property type="match status" value="1"/>
</dbReference>
<dbReference type="FunFam" id="3.90.1150.10:FF:000029">
    <property type="entry name" value="5-aminolevulinate synthase"/>
    <property type="match status" value="1"/>
</dbReference>
<dbReference type="FunFam" id="3.40.640.10:FF:000006">
    <property type="entry name" value="5-aminolevulinate synthase, mitochondrial"/>
    <property type="match status" value="1"/>
</dbReference>
<dbReference type="Gene3D" id="4.10.92.10">
    <property type="entry name" value="Aminolevulinic Acid Synthase 2"/>
    <property type="match status" value="1"/>
</dbReference>
<dbReference type="Gene3D" id="3.90.1150.10">
    <property type="entry name" value="Aspartate Aminotransferase, domain 1"/>
    <property type="match status" value="1"/>
</dbReference>
<dbReference type="Gene3D" id="3.40.640.10">
    <property type="entry name" value="Type I PLP-dependent aspartate aminotransferase-like (Major domain)"/>
    <property type="match status" value="1"/>
</dbReference>
<dbReference type="InterPro" id="IPR010961">
    <property type="entry name" value="4pyrrol_synth_NH2levulA_synth"/>
</dbReference>
<dbReference type="InterPro" id="IPR015118">
    <property type="entry name" value="5aminolev_synth_preseq"/>
</dbReference>
<dbReference type="InterPro" id="IPR001917">
    <property type="entry name" value="Aminotrans_II_pyridoxalP_BS"/>
</dbReference>
<dbReference type="InterPro" id="IPR004839">
    <property type="entry name" value="Aminotransferase_I/II_large"/>
</dbReference>
<dbReference type="InterPro" id="IPR050087">
    <property type="entry name" value="AON_synthase_class-II"/>
</dbReference>
<dbReference type="InterPro" id="IPR015424">
    <property type="entry name" value="PyrdxlP-dep_Trfase"/>
</dbReference>
<dbReference type="InterPro" id="IPR015421">
    <property type="entry name" value="PyrdxlP-dep_Trfase_major"/>
</dbReference>
<dbReference type="InterPro" id="IPR015422">
    <property type="entry name" value="PyrdxlP-dep_Trfase_small"/>
</dbReference>
<dbReference type="NCBIfam" id="TIGR01821">
    <property type="entry name" value="5aminolev_synth"/>
    <property type="match status" value="1"/>
</dbReference>
<dbReference type="PANTHER" id="PTHR13693:SF58">
    <property type="entry name" value="5-AMINOLEVULINATE SYNTHASE, ERYTHROID-SPECIFIC, MITOCHONDRIAL"/>
    <property type="match status" value="1"/>
</dbReference>
<dbReference type="PANTHER" id="PTHR13693">
    <property type="entry name" value="CLASS II AMINOTRANSFERASE/8-AMINO-7-OXONONANOATE SYNTHASE"/>
    <property type="match status" value="1"/>
</dbReference>
<dbReference type="Pfam" id="PF00155">
    <property type="entry name" value="Aminotran_1_2"/>
    <property type="match status" value="1"/>
</dbReference>
<dbReference type="Pfam" id="PF09029">
    <property type="entry name" value="Preseq_ALAS"/>
    <property type="match status" value="1"/>
</dbReference>
<dbReference type="SUPFAM" id="SSF53383">
    <property type="entry name" value="PLP-dependent transferases"/>
    <property type="match status" value="1"/>
</dbReference>
<dbReference type="PROSITE" id="PS00599">
    <property type="entry name" value="AA_TRANSFER_CLASS_2"/>
    <property type="match status" value="1"/>
</dbReference>
<accession>Q9XT75</accession>
<organism>
    <name type="scientific">Delphinapterus leucas</name>
    <name type="common">Beluga whale</name>
    <dbReference type="NCBI Taxonomy" id="9749"/>
    <lineage>
        <taxon>Eukaryota</taxon>
        <taxon>Metazoa</taxon>
        <taxon>Chordata</taxon>
        <taxon>Craniata</taxon>
        <taxon>Vertebrata</taxon>
        <taxon>Euteleostomi</taxon>
        <taxon>Mammalia</taxon>
        <taxon>Eutheria</taxon>
        <taxon>Laurasiatheria</taxon>
        <taxon>Artiodactyla</taxon>
        <taxon>Whippomorpha</taxon>
        <taxon>Cetacea</taxon>
        <taxon>Odontoceti</taxon>
        <taxon>Monodontidae</taxon>
        <taxon>Delphinapterus</taxon>
    </lineage>
</organism>
<gene>
    <name type="primary">ALAS2</name>
    <name type="synonym">ALS2</name>
</gene>
<keyword id="KW-0012">Acyltransferase</keyword>
<keyword id="KW-0350">Heme biosynthesis</keyword>
<keyword id="KW-0472">Membrane</keyword>
<keyword id="KW-0496">Mitochondrion</keyword>
<keyword id="KW-0999">Mitochondrion inner membrane</keyword>
<keyword id="KW-0663">Pyridoxal phosphate</keyword>
<keyword id="KW-1185">Reference proteome</keyword>
<keyword id="KW-0808">Transferase</keyword>
<keyword id="KW-0809">Transit peptide</keyword>
<feature type="transit peptide" description="Mitochondrion" evidence="3">
    <location>
        <begin position="1"/>
        <end position="44" status="uncertain"/>
    </location>
</feature>
<feature type="chain" id="PRO_0000001222" description="5-aminolevulinate synthase, erythroid-specific, mitochondrial">
    <location>
        <begin position="45" status="uncertain"/>
        <end position="582"/>
    </location>
</feature>
<feature type="active site" evidence="1">
    <location>
        <position position="386"/>
    </location>
</feature>
<feature type="binding site" evidence="1">
    <location>
        <position position="158"/>
    </location>
    <ligand>
        <name>succinyl-CoA</name>
        <dbReference type="ChEBI" id="CHEBI:57292"/>
    </ligand>
</feature>
<feature type="binding site" description="in other chain" evidence="2">
    <location>
        <position position="253"/>
    </location>
    <ligand>
        <name>pyridoxal 5'-phosphate</name>
        <dbReference type="ChEBI" id="CHEBI:597326"/>
        <note>ligand shared between dimeric partners</note>
    </ligand>
</feature>
<feature type="binding site" description="in other chain" evidence="2">
    <location>
        <position position="254"/>
    </location>
    <ligand>
        <name>pyridoxal 5'-phosphate</name>
        <dbReference type="ChEBI" id="CHEBI:597326"/>
        <note>ligand shared between dimeric partners</note>
    </ligand>
</feature>
<feature type="binding site" evidence="1">
    <location>
        <position position="275"/>
    </location>
    <ligand>
        <name>succinyl-CoA</name>
        <dbReference type="ChEBI" id="CHEBI:57292"/>
    </ligand>
</feature>
<feature type="binding site" evidence="1">
    <location>
        <position position="294"/>
    </location>
    <ligand>
        <name>succinyl-CoA</name>
        <dbReference type="ChEBI" id="CHEBI:57292"/>
    </ligand>
</feature>
<feature type="binding site" description="in other chain" evidence="1">
    <location>
        <position position="327"/>
    </location>
    <ligand>
        <name>pyridoxal 5'-phosphate</name>
        <dbReference type="ChEBI" id="CHEBI:597326"/>
        <note>ligand shared between dimeric partners</note>
    </ligand>
</feature>
<feature type="binding site" description="in other chain" evidence="2">
    <location>
        <position position="355"/>
    </location>
    <ligand>
        <name>pyridoxal 5'-phosphate</name>
        <dbReference type="ChEBI" id="CHEBI:597326"/>
        <note>ligand shared between dimeric partners</note>
    </ligand>
</feature>
<feature type="binding site" description="in other chain" evidence="2">
    <location>
        <position position="383"/>
    </location>
    <ligand>
        <name>pyridoxal 5'-phosphate</name>
        <dbReference type="ChEBI" id="CHEBI:597326"/>
        <note>ligand shared between dimeric partners</note>
    </ligand>
</feature>
<feature type="binding site" evidence="2">
    <location>
        <position position="415"/>
    </location>
    <ligand>
        <name>pyridoxal 5'-phosphate</name>
        <dbReference type="ChEBI" id="CHEBI:597326"/>
        <note>ligand shared between dimeric partners</note>
    </ligand>
</feature>
<feature type="binding site" evidence="2">
    <location>
        <position position="416"/>
    </location>
    <ligand>
        <name>pyridoxal 5'-phosphate</name>
        <dbReference type="ChEBI" id="CHEBI:597326"/>
        <note>ligand shared between dimeric partners</note>
    </ligand>
</feature>
<feature type="binding site" evidence="1">
    <location>
        <position position="503"/>
    </location>
    <ligand>
        <name>succinyl-CoA</name>
        <dbReference type="ChEBI" id="CHEBI:57292"/>
    </ligand>
</feature>
<feature type="modified residue" description="N6-(pyridoxal phosphate)lysine" evidence="2">
    <location>
        <position position="386"/>
    </location>
</feature>
<name>HEM0_DELLE</name>